<dbReference type="EMBL" id="BA000053">
    <property type="protein sequence ID" value="BAE62867.1"/>
    <property type="status" value="ALT_SEQ"/>
    <property type="molecule type" value="Genomic_DNA"/>
</dbReference>
<dbReference type="RefSeq" id="XP_001824000.2">
    <property type="nucleotide sequence ID" value="XM_001823948.2"/>
</dbReference>
<dbReference type="SMR" id="Q2U6E8"/>
<dbReference type="STRING" id="510516.Q2U6E8"/>
<dbReference type="VEuPathDB" id="FungiDB:AO090120000266"/>
<dbReference type="Proteomes" id="UP000006564">
    <property type="component" value="Chromosome 5"/>
</dbReference>
<dbReference type="GO" id="GO:0033557">
    <property type="term" value="C:Slx1-Slx4 complex"/>
    <property type="evidence" value="ECO:0007669"/>
    <property type="project" value="UniProtKB-UniRule"/>
</dbReference>
<dbReference type="GO" id="GO:0017108">
    <property type="term" value="F:5'-flap endonuclease activity"/>
    <property type="evidence" value="ECO:0007669"/>
    <property type="project" value="InterPro"/>
</dbReference>
<dbReference type="GO" id="GO:0006310">
    <property type="term" value="P:DNA recombination"/>
    <property type="evidence" value="ECO:0007669"/>
    <property type="project" value="UniProtKB-UniRule"/>
</dbReference>
<dbReference type="GO" id="GO:0006281">
    <property type="term" value="P:DNA repair"/>
    <property type="evidence" value="ECO:0007669"/>
    <property type="project" value="UniProtKB-UniRule"/>
</dbReference>
<dbReference type="GO" id="GO:0006260">
    <property type="term" value="P:DNA replication"/>
    <property type="evidence" value="ECO:0007669"/>
    <property type="project" value="InterPro"/>
</dbReference>
<dbReference type="CDD" id="cd22999">
    <property type="entry name" value="SAP_SLX4"/>
    <property type="match status" value="1"/>
</dbReference>
<dbReference type="HAMAP" id="MF_03110">
    <property type="entry name" value="Endonuc_su_Slx4"/>
    <property type="match status" value="1"/>
</dbReference>
<dbReference type="InterPro" id="IPR027784">
    <property type="entry name" value="Slx4_ascomycetes"/>
</dbReference>
<dbReference type="InterPro" id="IPR018574">
    <property type="entry name" value="Structure-sp_endonuc_su_Slx4"/>
</dbReference>
<dbReference type="Pfam" id="PF09494">
    <property type="entry name" value="Slx4"/>
    <property type="match status" value="1"/>
</dbReference>
<evidence type="ECO:0000255" key="1">
    <source>
        <dbReference type="HAMAP-Rule" id="MF_03110"/>
    </source>
</evidence>
<evidence type="ECO:0000256" key="2">
    <source>
        <dbReference type="SAM" id="MobiDB-lite"/>
    </source>
</evidence>
<evidence type="ECO:0000305" key="3"/>
<feature type="chain" id="PRO_0000388017" description="Structure-specific endonuclease subunit slx4">
    <location>
        <begin position="1"/>
        <end position="819"/>
    </location>
</feature>
<feature type="region of interest" description="Disordered" evidence="2">
    <location>
        <begin position="1"/>
        <end position="187"/>
    </location>
</feature>
<feature type="region of interest" description="Disordered" evidence="2">
    <location>
        <begin position="207"/>
        <end position="370"/>
    </location>
</feature>
<feature type="region of interest" description="Disordered" evidence="2">
    <location>
        <begin position="466"/>
        <end position="553"/>
    </location>
</feature>
<feature type="region of interest" description="Disordered" evidence="2">
    <location>
        <begin position="591"/>
        <end position="741"/>
    </location>
</feature>
<feature type="compositionally biased region" description="Low complexity" evidence="2">
    <location>
        <begin position="36"/>
        <end position="49"/>
    </location>
</feature>
<feature type="compositionally biased region" description="Basic and acidic residues" evidence="2">
    <location>
        <begin position="59"/>
        <end position="80"/>
    </location>
</feature>
<feature type="compositionally biased region" description="Polar residues" evidence="2">
    <location>
        <begin position="83"/>
        <end position="95"/>
    </location>
</feature>
<feature type="compositionally biased region" description="Polar residues" evidence="2">
    <location>
        <begin position="212"/>
        <end position="237"/>
    </location>
</feature>
<feature type="compositionally biased region" description="Basic and acidic residues" evidence="2">
    <location>
        <begin position="256"/>
        <end position="272"/>
    </location>
</feature>
<feature type="compositionally biased region" description="Basic and acidic residues" evidence="2">
    <location>
        <begin position="282"/>
        <end position="304"/>
    </location>
</feature>
<feature type="compositionally biased region" description="Polar residues" evidence="2">
    <location>
        <begin position="313"/>
        <end position="329"/>
    </location>
</feature>
<feature type="compositionally biased region" description="Polar residues" evidence="2">
    <location>
        <begin position="337"/>
        <end position="351"/>
    </location>
</feature>
<feature type="compositionally biased region" description="Basic residues" evidence="2">
    <location>
        <begin position="352"/>
        <end position="362"/>
    </location>
</feature>
<feature type="compositionally biased region" description="Basic and acidic residues" evidence="2">
    <location>
        <begin position="495"/>
        <end position="506"/>
    </location>
</feature>
<feature type="compositionally biased region" description="Polar residues" evidence="2">
    <location>
        <begin position="532"/>
        <end position="541"/>
    </location>
</feature>
<feature type="compositionally biased region" description="Polar residues" evidence="2">
    <location>
        <begin position="592"/>
        <end position="620"/>
    </location>
</feature>
<feature type="compositionally biased region" description="Basic residues" evidence="2">
    <location>
        <begin position="621"/>
        <end position="633"/>
    </location>
</feature>
<feature type="compositionally biased region" description="Polar residues" evidence="2">
    <location>
        <begin position="650"/>
        <end position="668"/>
    </location>
</feature>
<feature type="compositionally biased region" description="Acidic residues" evidence="2">
    <location>
        <begin position="681"/>
        <end position="690"/>
    </location>
</feature>
<feature type="compositionally biased region" description="Polar residues" evidence="2">
    <location>
        <begin position="729"/>
        <end position="741"/>
    </location>
</feature>
<accession>Q2U6E8</accession>
<name>SLX4_ASPOR</name>
<organism>
    <name type="scientific">Aspergillus oryzae (strain ATCC 42149 / RIB 40)</name>
    <name type="common">Yellow koji mold</name>
    <dbReference type="NCBI Taxonomy" id="510516"/>
    <lineage>
        <taxon>Eukaryota</taxon>
        <taxon>Fungi</taxon>
        <taxon>Dikarya</taxon>
        <taxon>Ascomycota</taxon>
        <taxon>Pezizomycotina</taxon>
        <taxon>Eurotiomycetes</taxon>
        <taxon>Eurotiomycetidae</taxon>
        <taxon>Eurotiales</taxon>
        <taxon>Aspergillaceae</taxon>
        <taxon>Aspergillus</taxon>
        <taxon>Aspergillus subgen. Circumdati</taxon>
    </lineage>
</organism>
<sequence>MSAAADVIVLSSSPDRIPNGSPVLPAHDPAKLFDLSPPSASSSPVRSPSELFQISTRSRFFELETPSRNKENKTPKEPPVRKVNTTSKAKSASSQDKPKRRGRKPASESQTVLGDSGLAGLAQQSAPKKTAGARKKRVDSEGKRGKATNRTIMGRVAKSGNVQAKPPQEKIMDVSTPNALPPTKPASGVVSLEIDGLQLETAMKRRIDWTPTKDTTARTVESSQQEVAEANPQSFGSLLSEYGFNDISSAQSDVRNLGDDGPTKRRRIELVDSRLFGSSKPASHDIDDKNLTEDSQQKQPEPKQKPKKQTKKFTTLTARVTASYLNNSHEGSDSSSKETTTSRENAATSRTRGSKRKGKATSKPKEPEFIVLSPEAAAKSLENQELIFGTCSQLEREDSPTSLKELQAAISESERYAVAEPSPLSSTLCATPTSRFTTARGLWSVAARDLEGSLIRQTEVVDLVDTPEPAKMTTSTNDSRNEKALEDAATVPPKEPFDLPKSEPPKLKAIPAAKKEPSPAPGMPTIKASDNLKGTTSQHSKPQPKMPNYNGFTDAELSRQVASYGFKPVKNRKAMIDLLQKCWVSKHGKGTTFETQAGSQNTSTEPTPVLTSSEPNTSQKQPRKTATSRKTAAKSKTNPDSNPPPKINSRKTPSSSDATKAPSIQSKPTQPPPIQSLSNVEEIEDSEEETLPSPFRIQNRYTPQPPETRQALPVSKTLYSPSRPKPRTTKSTTNNSATLNQKQPDLADQIFKAMHAQPAGTPSRPSWHEKILMYDPIILEDFATWLNTEGLGLVGEDREVSAAFLRKWCESRGICCCYR</sequence>
<proteinExistence type="inferred from homology"/>
<comment type="function">
    <text evidence="1">Regulatory subunit of the slx1-slx4 structure-specific endonuclease that resolves DNA secondary structures generated during DNA repair and recombination. Has endonuclease activity towards branched DNA substrates, introducing single-strand cuts in duplex DNA close to junctions with ss-DNA.</text>
</comment>
<comment type="subunit">
    <text evidence="1">Forms a heterodimer with slx1.</text>
</comment>
<comment type="subcellular location">
    <subcellularLocation>
        <location evidence="1">Nucleus</location>
    </subcellularLocation>
</comment>
<comment type="PTM">
    <text evidence="1">Phosphorylated in response to DNA damage.</text>
</comment>
<comment type="similarity">
    <text evidence="1">Belongs to the SLX4 family.</text>
</comment>
<comment type="sequence caution" evidence="3">
    <conflict type="erroneous gene model prediction">
        <sequence resource="EMBL-CDS" id="BAE62867"/>
    </conflict>
</comment>
<gene>
    <name type="primary">slx4</name>
    <name type="ORF">AO090120000266</name>
</gene>
<keyword id="KW-0227">DNA damage</keyword>
<keyword id="KW-0233">DNA recombination</keyword>
<keyword id="KW-0234">DNA repair</keyword>
<keyword id="KW-0539">Nucleus</keyword>
<keyword id="KW-0597">Phosphoprotein</keyword>
<keyword id="KW-1185">Reference proteome</keyword>
<protein>
    <recommendedName>
        <fullName evidence="1">Structure-specific endonuclease subunit slx4</fullName>
    </recommendedName>
</protein>
<reference key="1">
    <citation type="journal article" date="2005" name="Nature">
        <title>Genome sequencing and analysis of Aspergillus oryzae.</title>
        <authorList>
            <person name="Machida M."/>
            <person name="Asai K."/>
            <person name="Sano M."/>
            <person name="Tanaka T."/>
            <person name="Kumagai T."/>
            <person name="Terai G."/>
            <person name="Kusumoto K."/>
            <person name="Arima T."/>
            <person name="Akita O."/>
            <person name="Kashiwagi Y."/>
            <person name="Abe K."/>
            <person name="Gomi K."/>
            <person name="Horiuchi H."/>
            <person name="Kitamoto K."/>
            <person name="Kobayashi T."/>
            <person name="Takeuchi M."/>
            <person name="Denning D.W."/>
            <person name="Galagan J.E."/>
            <person name="Nierman W.C."/>
            <person name="Yu J."/>
            <person name="Archer D.B."/>
            <person name="Bennett J.W."/>
            <person name="Bhatnagar D."/>
            <person name="Cleveland T.E."/>
            <person name="Fedorova N.D."/>
            <person name="Gotoh O."/>
            <person name="Horikawa H."/>
            <person name="Hosoyama A."/>
            <person name="Ichinomiya M."/>
            <person name="Igarashi R."/>
            <person name="Iwashita K."/>
            <person name="Juvvadi P.R."/>
            <person name="Kato M."/>
            <person name="Kato Y."/>
            <person name="Kin T."/>
            <person name="Kokubun A."/>
            <person name="Maeda H."/>
            <person name="Maeyama N."/>
            <person name="Maruyama J."/>
            <person name="Nagasaki H."/>
            <person name="Nakajima T."/>
            <person name="Oda K."/>
            <person name="Okada K."/>
            <person name="Paulsen I."/>
            <person name="Sakamoto K."/>
            <person name="Sawano T."/>
            <person name="Takahashi M."/>
            <person name="Takase K."/>
            <person name="Terabayashi Y."/>
            <person name="Wortman J.R."/>
            <person name="Yamada O."/>
            <person name="Yamagata Y."/>
            <person name="Anazawa H."/>
            <person name="Hata Y."/>
            <person name="Koide Y."/>
            <person name="Komori T."/>
            <person name="Koyama Y."/>
            <person name="Minetoki T."/>
            <person name="Suharnan S."/>
            <person name="Tanaka A."/>
            <person name="Isono K."/>
            <person name="Kuhara S."/>
            <person name="Ogasawara N."/>
            <person name="Kikuchi H."/>
        </authorList>
    </citation>
    <scope>NUCLEOTIDE SEQUENCE [LARGE SCALE GENOMIC DNA]</scope>
    <source>
        <strain>ATCC 42149 / RIB 40</strain>
    </source>
</reference>